<proteinExistence type="inferred from homology"/>
<keyword id="KW-0963">Cytoplasm</keyword>
<keyword id="KW-0251">Elongation factor</keyword>
<keyword id="KW-0379">Hydroxylation</keyword>
<keyword id="KW-0648">Protein biosynthesis</keyword>
<protein>
    <recommendedName>
        <fullName evidence="1">Elongation factor P</fullName>
        <shortName evidence="1">EF-P</shortName>
    </recommendedName>
</protein>
<accession>B7I499</accession>
<feature type="chain" id="PRO_1000117881" description="Elongation factor P">
    <location>
        <begin position="1"/>
        <end position="189"/>
    </location>
</feature>
<feature type="modified residue" description="N6-(3,6-diaminohexanoyl)-5-hydroxylysine" evidence="1">
    <location>
        <position position="34"/>
    </location>
</feature>
<gene>
    <name evidence="1" type="primary">efp</name>
    <name type="ordered locus">AB57_2848</name>
</gene>
<dbReference type="EMBL" id="CP001182">
    <property type="protein sequence ID" value="ACJ42198.1"/>
    <property type="molecule type" value="Genomic_DNA"/>
</dbReference>
<dbReference type="RefSeq" id="WP_000035083.1">
    <property type="nucleotide sequence ID" value="NC_011586.2"/>
</dbReference>
<dbReference type="SMR" id="B7I499"/>
<dbReference type="GeneID" id="92894727"/>
<dbReference type="KEGG" id="abn:AB57_2848"/>
<dbReference type="HOGENOM" id="CLU_074944_0_0_6"/>
<dbReference type="UniPathway" id="UPA00345"/>
<dbReference type="Proteomes" id="UP000007094">
    <property type="component" value="Chromosome"/>
</dbReference>
<dbReference type="GO" id="GO:0005737">
    <property type="term" value="C:cytoplasm"/>
    <property type="evidence" value="ECO:0007669"/>
    <property type="project" value="UniProtKB-SubCell"/>
</dbReference>
<dbReference type="GO" id="GO:0003746">
    <property type="term" value="F:translation elongation factor activity"/>
    <property type="evidence" value="ECO:0007669"/>
    <property type="project" value="UniProtKB-UniRule"/>
</dbReference>
<dbReference type="GO" id="GO:0043043">
    <property type="term" value="P:peptide biosynthetic process"/>
    <property type="evidence" value="ECO:0007669"/>
    <property type="project" value="InterPro"/>
</dbReference>
<dbReference type="CDD" id="cd04470">
    <property type="entry name" value="S1_EF-P_repeat_1"/>
    <property type="match status" value="1"/>
</dbReference>
<dbReference type="CDD" id="cd05794">
    <property type="entry name" value="S1_EF-P_repeat_2"/>
    <property type="match status" value="1"/>
</dbReference>
<dbReference type="FunFam" id="2.30.30.30:FF:000003">
    <property type="entry name" value="Elongation factor P"/>
    <property type="match status" value="1"/>
</dbReference>
<dbReference type="FunFam" id="2.40.50.140:FF:000004">
    <property type="entry name" value="Elongation factor P"/>
    <property type="match status" value="1"/>
</dbReference>
<dbReference type="FunFam" id="2.40.50.140:FF:000009">
    <property type="entry name" value="Elongation factor P"/>
    <property type="match status" value="1"/>
</dbReference>
<dbReference type="Gene3D" id="2.30.30.30">
    <property type="match status" value="1"/>
</dbReference>
<dbReference type="Gene3D" id="2.40.50.140">
    <property type="entry name" value="Nucleic acid-binding proteins"/>
    <property type="match status" value="2"/>
</dbReference>
<dbReference type="HAMAP" id="MF_00141">
    <property type="entry name" value="EF_P"/>
    <property type="match status" value="1"/>
</dbReference>
<dbReference type="InterPro" id="IPR015365">
    <property type="entry name" value="Elong-fact-P_C"/>
</dbReference>
<dbReference type="InterPro" id="IPR012340">
    <property type="entry name" value="NA-bd_OB-fold"/>
</dbReference>
<dbReference type="InterPro" id="IPR014722">
    <property type="entry name" value="Rib_uL2_dom2"/>
</dbReference>
<dbReference type="InterPro" id="IPR020599">
    <property type="entry name" value="Transl_elong_fac_P/YeiP"/>
</dbReference>
<dbReference type="InterPro" id="IPR013185">
    <property type="entry name" value="Transl_elong_KOW-like"/>
</dbReference>
<dbReference type="InterPro" id="IPR001059">
    <property type="entry name" value="Transl_elong_P/YeiP_cen"/>
</dbReference>
<dbReference type="InterPro" id="IPR011768">
    <property type="entry name" value="Transl_elongation_fac_P"/>
</dbReference>
<dbReference type="InterPro" id="IPR008991">
    <property type="entry name" value="Translation_prot_SH3-like_sf"/>
</dbReference>
<dbReference type="NCBIfam" id="TIGR00038">
    <property type="entry name" value="efp"/>
    <property type="match status" value="1"/>
</dbReference>
<dbReference type="NCBIfam" id="NF001810">
    <property type="entry name" value="PRK00529.1"/>
    <property type="match status" value="1"/>
</dbReference>
<dbReference type="PANTHER" id="PTHR30053">
    <property type="entry name" value="ELONGATION FACTOR P"/>
    <property type="match status" value="1"/>
</dbReference>
<dbReference type="PANTHER" id="PTHR30053:SF12">
    <property type="entry name" value="ELONGATION FACTOR P (EF-P) FAMILY PROTEIN"/>
    <property type="match status" value="1"/>
</dbReference>
<dbReference type="Pfam" id="PF01132">
    <property type="entry name" value="EFP"/>
    <property type="match status" value="1"/>
</dbReference>
<dbReference type="Pfam" id="PF08207">
    <property type="entry name" value="EFP_N"/>
    <property type="match status" value="1"/>
</dbReference>
<dbReference type="Pfam" id="PF09285">
    <property type="entry name" value="Elong-fact-P_C"/>
    <property type="match status" value="1"/>
</dbReference>
<dbReference type="PIRSF" id="PIRSF005901">
    <property type="entry name" value="EF-P"/>
    <property type="match status" value="1"/>
</dbReference>
<dbReference type="SMART" id="SM01185">
    <property type="entry name" value="EFP"/>
    <property type="match status" value="1"/>
</dbReference>
<dbReference type="SMART" id="SM00841">
    <property type="entry name" value="Elong-fact-P_C"/>
    <property type="match status" value="1"/>
</dbReference>
<dbReference type="SUPFAM" id="SSF50249">
    <property type="entry name" value="Nucleic acid-binding proteins"/>
    <property type="match status" value="2"/>
</dbReference>
<dbReference type="SUPFAM" id="SSF50104">
    <property type="entry name" value="Translation proteins SH3-like domain"/>
    <property type="match status" value="1"/>
</dbReference>
<name>EFP_ACIB5</name>
<organism>
    <name type="scientific">Acinetobacter baumannii (strain AB0057)</name>
    <dbReference type="NCBI Taxonomy" id="480119"/>
    <lineage>
        <taxon>Bacteria</taxon>
        <taxon>Pseudomonadati</taxon>
        <taxon>Pseudomonadota</taxon>
        <taxon>Gammaproteobacteria</taxon>
        <taxon>Moraxellales</taxon>
        <taxon>Moraxellaceae</taxon>
        <taxon>Acinetobacter</taxon>
        <taxon>Acinetobacter calcoaceticus/baumannii complex</taxon>
    </lineage>
</organism>
<sequence length="189" mass="20892">MANYSTNDFKPGLKVMLDSNPCSIMENEYVKPGKGQAFNRVKLRNLKTGKVLEKTFKSGDTLEAADIVEVEMNYLYNDGEMWHFMDPESFEQIAADKTAMGDAAKWLKDDSNETCTIMLFNGVPLNVNAPNFVVLKVVETDPGVRGDTSGGGGKPAKLETGAVVRVPLFVQQEESVRVDTRTGEYLERA</sequence>
<evidence type="ECO:0000255" key="1">
    <source>
        <dbReference type="HAMAP-Rule" id="MF_00141"/>
    </source>
</evidence>
<reference key="1">
    <citation type="journal article" date="2008" name="J. Bacteriol.">
        <title>Comparative genome sequence analysis of multidrug-resistant Acinetobacter baumannii.</title>
        <authorList>
            <person name="Adams M.D."/>
            <person name="Goglin K."/>
            <person name="Molyneaux N."/>
            <person name="Hujer K.M."/>
            <person name="Lavender H."/>
            <person name="Jamison J.J."/>
            <person name="MacDonald I.J."/>
            <person name="Martin K.M."/>
            <person name="Russo T."/>
            <person name="Campagnari A.A."/>
            <person name="Hujer A.M."/>
            <person name="Bonomo R.A."/>
            <person name="Gill S.R."/>
        </authorList>
    </citation>
    <scope>NUCLEOTIDE SEQUENCE [LARGE SCALE GENOMIC DNA]</scope>
    <source>
        <strain>AB0057</strain>
    </source>
</reference>
<comment type="function">
    <text evidence="1">Involved in peptide bond synthesis. Alleviates ribosome stalling that occurs when 3 or more consecutive Pro residues or the sequence PPG is present in a protein, possibly by augmenting the peptidyl transferase activity of the ribosome. Modification of Lys-34 is required for alleviation.</text>
</comment>
<comment type="pathway">
    <text evidence="1">Protein biosynthesis; polypeptide chain elongation.</text>
</comment>
<comment type="subcellular location">
    <subcellularLocation>
        <location evidence="1">Cytoplasm</location>
    </subcellularLocation>
</comment>
<comment type="PTM">
    <text evidence="1">May be beta-lysylated on the epsilon-amino group of Lys-34 by the combined action of EpmA and EpmB, and then hydroxylated on the C5 position of the same residue by EpmC (if this protein is present). Lysylation is critical for the stimulatory effect of EF-P on peptide-bond formation. The lysylation moiety may extend toward the peptidyltransferase center and stabilize the terminal 3-CCA end of the tRNA. Hydroxylation of the C5 position on Lys-34 may allow additional potential stabilizing hydrogen-bond interactions with the P-tRNA.</text>
</comment>
<comment type="similarity">
    <text evidence="1">Belongs to the elongation factor P family.</text>
</comment>